<reference key="1">
    <citation type="submission" date="2004-02" db="EMBL/GenBank/DDBJ databases">
        <title>Calnexin from Aspergillus fumigatus YJ-407.</title>
        <authorList>
            <person name="Zhang L."/>
            <person name="Jin C."/>
        </authorList>
    </citation>
    <scope>NUCLEOTIDE SEQUENCE [MRNA]</scope>
    <source>
        <strain>YJ-407</strain>
    </source>
</reference>
<reference key="2">
    <citation type="journal article" date="2005" name="Nature">
        <title>Genomic sequence of the pathogenic and allergenic filamentous fungus Aspergillus fumigatus.</title>
        <authorList>
            <person name="Nierman W.C."/>
            <person name="Pain A."/>
            <person name="Anderson M.J."/>
            <person name="Wortman J.R."/>
            <person name="Kim H.S."/>
            <person name="Arroyo J."/>
            <person name="Berriman M."/>
            <person name="Abe K."/>
            <person name="Archer D.B."/>
            <person name="Bermejo C."/>
            <person name="Bennett J.W."/>
            <person name="Bowyer P."/>
            <person name="Chen D."/>
            <person name="Collins M."/>
            <person name="Coulsen R."/>
            <person name="Davies R."/>
            <person name="Dyer P.S."/>
            <person name="Farman M.L."/>
            <person name="Fedorova N."/>
            <person name="Fedorova N.D."/>
            <person name="Feldblyum T.V."/>
            <person name="Fischer R."/>
            <person name="Fosker N."/>
            <person name="Fraser A."/>
            <person name="Garcia J.L."/>
            <person name="Garcia M.J."/>
            <person name="Goble A."/>
            <person name="Goldman G.H."/>
            <person name="Gomi K."/>
            <person name="Griffith-Jones S."/>
            <person name="Gwilliam R."/>
            <person name="Haas B.J."/>
            <person name="Haas H."/>
            <person name="Harris D.E."/>
            <person name="Horiuchi H."/>
            <person name="Huang J."/>
            <person name="Humphray S."/>
            <person name="Jimenez J."/>
            <person name="Keller N."/>
            <person name="Khouri H."/>
            <person name="Kitamoto K."/>
            <person name="Kobayashi T."/>
            <person name="Konzack S."/>
            <person name="Kulkarni R."/>
            <person name="Kumagai T."/>
            <person name="Lafton A."/>
            <person name="Latge J.-P."/>
            <person name="Li W."/>
            <person name="Lord A."/>
            <person name="Lu C."/>
            <person name="Majoros W.H."/>
            <person name="May G.S."/>
            <person name="Miller B.L."/>
            <person name="Mohamoud Y."/>
            <person name="Molina M."/>
            <person name="Monod M."/>
            <person name="Mouyna I."/>
            <person name="Mulligan S."/>
            <person name="Murphy L.D."/>
            <person name="O'Neil S."/>
            <person name="Paulsen I."/>
            <person name="Penalva M.A."/>
            <person name="Pertea M."/>
            <person name="Price C."/>
            <person name="Pritchard B.L."/>
            <person name="Quail M.A."/>
            <person name="Rabbinowitsch E."/>
            <person name="Rawlins N."/>
            <person name="Rajandream M.A."/>
            <person name="Reichard U."/>
            <person name="Renauld H."/>
            <person name="Robson G.D."/>
            <person name="Rodriguez de Cordoba S."/>
            <person name="Rodriguez-Pena J.M."/>
            <person name="Ronning C.M."/>
            <person name="Rutter S."/>
            <person name="Salzberg S.L."/>
            <person name="Sanchez M."/>
            <person name="Sanchez-Ferrero J.C."/>
            <person name="Saunders D."/>
            <person name="Seeger K."/>
            <person name="Squares R."/>
            <person name="Squares S."/>
            <person name="Takeuchi M."/>
            <person name="Tekaia F."/>
            <person name="Turner G."/>
            <person name="Vazquez de Aldana C.R."/>
            <person name="Weidman J."/>
            <person name="White O."/>
            <person name="Woodward J.R."/>
            <person name="Yu J.-H."/>
            <person name="Fraser C.M."/>
            <person name="Galagan J.E."/>
            <person name="Asai K."/>
            <person name="Machida M."/>
            <person name="Hall N."/>
            <person name="Barrell B.G."/>
            <person name="Denning D.W."/>
        </authorList>
    </citation>
    <scope>NUCLEOTIDE SEQUENCE [LARGE SCALE GENOMIC DNA]</scope>
    <source>
        <strain>ATCC MYA-4609 / CBS 101355 / FGSC A1100 / Af293</strain>
    </source>
</reference>
<proteinExistence type="evidence at transcript level"/>
<organism>
    <name type="scientific">Aspergillus fumigatus (strain ATCC MYA-4609 / CBS 101355 / FGSC A1100 / Af293)</name>
    <name type="common">Neosartorya fumigata</name>
    <dbReference type="NCBI Taxonomy" id="330879"/>
    <lineage>
        <taxon>Eukaryota</taxon>
        <taxon>Fungi</taxon>
        <taxon>Dikarya</taxon>
        <taxon>Ascomycota</taxon>
        <taxon>Pezizomycotina</taxon>
        <taxon>Eurotiomycetes</taxon>
        <taxon>Eurotiomycetidae</taxon>
        <taxon>Eurotiales</taxon>
        <taxon>Aspergillaceae</taxon>
        <taxon>Aspergillus</taxon>
        <taxon>Aspergillus subgen. Fumigati</taxon>
    </lineage>
</organism>
<protein>
    <recommendedName>
        <fullName>Calnexin homolog</fullName>
    </recommendedName>
</protein>
<evidence type="ECO:0000250" key="1"/>
<evidence type="ECO:0000250" key="2">
    <source>
        <dbReference type="UniProtKB" id="P14211"/>
    </source>
</evidence>
<evidence type="ECO:0000255" key="3"/>
<evidence type="ECO:0000256" key="4">
    <source>
        <dbReference type="SAM" id="MobiDB-lite"/>
    </source>
</evidence>
<evidence type="ECO:0000305" key="5"/>
<dbReference type="EMBL" id="AY560606">
    <property type="protein sequence ID" value="AAS68033.1"/>
    <property type="molecule type" value="mRNA"/>
</dbReference>
<dbReference type="EMBL" id="AAHF01000005">
    <property type="protein sequence ID" value="EAL89509.1"/>
    <property type="molecule type" value="Genomic_DNA"/>
</dbReference>
<dbReference type="RefSeq" id="XP_751547.1">
    <property type="nucleotide sequence ID" value="XM_746454.1"/>
</dbReference>
<dbReference type="SMR" id="Q6Q487"/>
<dbReference type="STRING" id="330879.Q6Q487"/>
<dbReference type="EnsemblFungi" id="EAL89509">
    <property type="protein sequence ID" value="EAL89509"/>
    <property type="gene ID" value="AFUA_4G12850"/>
</dbReference>
<dbReference type="GeneID" id="3509033"/>
<dbReference type="KEGG" id="afm:AFUA_4G12850"/>
<dbReference type="VEuPathDB" id="FungiDB:Afu4g12850"/>
<dbReference type="eggNOG" id="KOG0675">
    <property type="taxonomic scope" value="Eukaryota"/>
</dbReference>
<dbReference type="HOGENOM" id="CLU_018224_1_2_1"/>
<dbReference type="InParanoid" id="Q6Q487"/>
<dbReference type="OMA" id="SGCGKWE"/>
<dbReference type="OrthoDB" id="1938156at2759"/>
<dbReference type="PHI-base" id="PHI:2306"/>
<dbReference type="Proteomes" id="UP000002530">
    <property type="component" value="Chromosome 4"/>
</dbReference>
<dbReference type="GO" id="GO:0005789">
    <property type="term" value="C:endoplasmic reticulum membrane"/>
    <property type="evidence" value="ECO:0000318"/>
    <property type="project" value="GO_Central"/>
</dbReference>
<dbReference type="GO" id="GO:0005509">
    <property type="term" value="F:calcium ion binding"/>
    <property type="evidence" value="ECO:0000318"/>
    <property type="project" value="GO_Central"/>
</dbReference>
<dbReference type="GO" id="GO:0030246">
    <property type="term" value="F:carbohydrate binding"/>
    <property type="evidence" value="ECO:0007669"/>
    <property type="project" value="UniProtKB-KW"/>
</dbReference>
<dbReference type="GO" id="GO:0051082">
    <property type="term" value="F:unfolded protein binding"/>
    <property type="evidence" value="ECO:0007669"/>
    <property type="project" value="InterPro"/>
</dbReference>
<dbReference type="GO" id="GO:0034605">
    <property type="term" value="P:cellular response to heat"/>
    <property type="evidence" value="ECO:0000315"/>
    <property type="project" value="AspGD"/>
</dbReference>
<dbReference type="GO" id="GO:0009267">
    <property type="term" value="P:cellular response to starvation"/>
    <property type="evidence" value="ECO:0000315"/>
    <property type="project" value="AspGD"/>
</dbReference>
<dbReference type="GO" id="GO:0036503">
    <property type="term" value="P:ERAD pathway"/>
    <property type="evidence" value="ECO:0000318"/>
    <property type="project" value="GO_Central"/>
</dbReference>
<dbReference type="GO" id="GO:0006457">
    <property type="term" value="P:protein folding"/>
    <property type="evidence" value="ECO:0000315"/>
    <property type="project" value="AspGD"/>
</dbReference>
<dbReference type="FunFam" id="2.10.250.10:FF:000001">
    <property type="entry name" value="Calnexin homolog"/>
    <property type="match status" value="1"/>
</dbReference>
<dbReference type="FunFam" id="2.60.120.200:FF:000011">
    <property type="entry name" value="Probable calnexin"/>
    <property type="match status" value="1"/>
</dbReference>
<dbReference type="Gene3D" id="2.60.120.200">
    <property type="match status" value="1"/>
</dbReference>
<dbReference type="Gene3D" id="2.10.250.10">
    <property type="entry name" value="Calreticulin/calnexin, P domain"/>
    <property type="match status" value="1"/>
</dbReference>
<dbReference type="InterPro" id="IPR001580">
    <property type="entry name" value="Calret/calnex"/>
</dbReference>
<dbReference type="InterPro" id="IPR018124">
    <property type="entry name" value="Calret/calnex_CS"/>
</dbReference>
<dbReference type="InterPro" id="IPR009033">
    <property type="entry name" value="Calreticulin/calnexin_P_dom_sf"/>
</dbReference>
<dbReference type="InterPro" id="IPR013320">
    <property type="entry name" value="ConA-like_dom_sf"/>
</dbReference>
<dbReference type="PANTHER" id="PTHR11073:SF1">
    <property type="entry name" value="CALNEXIN 14D-RELATED"/>
    <property type="match status" value="1"/>
</dbReference>
<dbReference type="PANTHER" id="PTHR11073">
    <property type="entry name" value="CALRETICULIN AND CALNEXIN"/>
    <property type="match status" value="1"/>
</dbReference>
<dbReference type="Pfam" id="PF00262">
    <property type="entry name" value="Calreticulin"/>
    <property type="match status" value="1"/>
</dbReference>
<dbReference type="PRINTS" id="PR00626">
    <property type="entry name" value="CALRETICULIN"/>
</dbReference>
<dbReference type="SUPFAM" id="SSF49899">
    <property type="entry name" value="Concanavalin A-like lectins/glucanases"/>
    <property type="match status" value="2"/>
</dbReference>
<dbReference type="SUPFAM" id="SSF63887">
    <property type="entry name" value="P-domain of calnexin/calreticulin"/>
    <property type="match status" value="1"/>
</dbReference>
<dbReference type="PROSITE" id="PS00803">
    <property type="entry name" value="CALRETICULIN_1"/>
    <property type="match status" value="1"/>
</dbReference>
<dbReference type="PROSITE" id="PS00804">
    <property type="entry name" value="CALRETICULIN_2"/>
    <property type="match status" value="1"/>
</dbReference>
<dbReference type="PROSITE" id="PS00805">
    <property type="entry name" value="CALRETICULIN_REPEAT"/>
    <property type="match status" value="2"/>
</dbReference>
<gene>
    <name type="ORF">AFUA_4G12850</name>
</gene>
<comment type="function">
    <text evidence="1">Interacts with newly synthesized monoglucosylated glycoproteins in the endoplasmic reticulum. It may act in assisting protein assembly and/or in the retention within the ER of unassembled protein subunits. It seems to play a major role in the quality control apparatus of the ER by the retention of incorrectly folded proteins (By similarity).</text>
</comment>
<comment type="subcellular location">
    <subcellularLocation>
        <location evidence="1">Endoplasmic reticulum membrane</location>
        <topology evidence="1">Single-pass type I membrane protein</topology>
    </subcellularLocation>
</comment>
<comment type="similarity">
    <text evidence="5">Belongs to the calreticulin family.</text>
</comment>
<keyword id="KW-0143">Chaperone</keyword>
<keyword id="KW-1015">Disulfide bond</keyword>
<keyword id="KW-0256">Endoplasmic reticulum</keyword>
<keyword id="KW-0325">Glycoprotein</keyword>
<keyword id="KW-0430">Lectin</keyword>
<keyword id="KW-0472">Membrane</keyword>
<keyword id="KW-0479">Metal-binding</keyword>
<keyword id="KW-1185">Reference proteome</keyword>
<keyword id="KW-0677">Repeat</keyword>
<keyword id="KW-0732">Signal</keyword>
<keyword id="KW-0812">Transmembrane</keyword>
<keyword id="KW-1133">Transmembrane helix</keyword>
<accession>Q6Q487</accession>
<accession>Q4WQH5</accession>
<sequence length="563" mass="61854">MRFNAAITGALVSSATLMGQAHAEETEKKADATSLVEKPTFTPTTIEAPFLEQFTADWDSRWTPSHAKKEDSKSEEDWAYVGEWAVEEPTVLNGMVGDKGLVVKNVAAHHAISAKFPKKIDNKGKTLVVQYEVKPQNSLVCGGAYMKLLQENKKLHAEEFSNATPYVIMFGPDKCGATNKVHFIFRHKNPKTGEYEEKHMTAPPAARTTKLTTLYTLIVKPDQSFQILIDGEAVKNGTLLEDFAPPVNPEKEIDDPKDKKPADWVDEAKIPDPEAKKPDDWDEDAPYEIVDEEATMPEDWLEDEPTSIPDPEAEKPEDWDDEEDGDWIPPTVPNPKCNEVSGCGPWTPPMKKNPAYKGKWTAPLIDNPAYKGIWKPRKIPNPAYFEDKTPSNFEPMGAVGFEIWTMQNDILFDNIYIGHSIEDAEKLRKETFDLKHPVEVALEEASKPKLEEKAATPSVSFKEAPVTYVREKVDYFVGLAKQDPINAVKQVPEVAGGLGALLLTMILVIVGAVGASSPAPAAAAKKGKEAASAAKEKASEAVSSAADTAKGAATKRNTRSSAQ</sequence>
<name>CALX_ASPFU</name>
<feature type="signal peptide" evidence="3">
    <location>
        <begin position="1"/>
        <end position="23"/>
    </location>
</feature>
<feature type="chain" id="PRO_0000043348" description="Calnexin homolog">
    <location>
        <begin position="24"/>
        <end position="563"/>
    </location>
</feature>
<feature type="topological domain" description="Lumenal" evidence="3">
    <location>
        <begin position="24"/>
        <end position="493"/>
    </location>
</feature>
<feature type="transmembrane region" description="Helical" evidence="3">
    <location>
        <begin position="494"/>
        <end position="514"/>
    </location>
</feature>
<feature type="topological domain" description="Cytoplasmic" evidence="3">
    <location>
        <begin position="515"/>
        <end position="563"/>
    </location>
</feature>
<feature type="region of interest" description="Disordered" evidence="4">
    <location>
        <begin position="241"/>
        <end position="323"/>
    </location>
</feature>
<feature type="region of interest" description="P domain (Extended arm)" evidence="1">
    <location>
        <begin position="253"/>
        <end position="386"/>
    </location>
</feature>
<feature type="region of interest" description="Disordered" evidence="4">
    <location>
        <begin position="521"/>
        <end position="563"/>
    </location>
</feature>
<feature type="compositionally biased region" description="Basic and acidic residues" evidence="4">
    <location>
        <begin position="249"/>
        <end position="279"/>
    </location>
</feature>
<feature type="compositionally biased region" description="Acidic residues" evidence="4">
    <location>
        <begin position="280"/>
        <end position="305"/>
    </location>
</feature>
<feature type="compositionally biased region" description="Basic and acidic residues" evidence="4">
    <location>
        <begin position="526"/>
        <end position="539"/>
    </location>
</feature>
<feature type="binding site" evidence="1">
    <location>
        <position position="98"/>
    </location>
    <ligand>
        <name>Ca(2+)</name>
        <dbReference type="ChEBI" id="CHEBI:29108"/>
    </ligand>
</feature>
<feature type="binding site" evidence="2">
    <location>
        <position position="145"/>
    </location>
    <ligand>
        <name>an alpha-D-glucoside</name>
        <dbReference type="ChEBI" id="CHEBI:22390"/>
    </ligand>
</feature>
<feature type="binding site" evidence="2">
    <location>
        <position position="147"/>
    </location>
    <ligand>
        <name>an alpha-D-glucoside</name>
        <dbReference type="ChEBI" id="CHEBI:22390"/>
    </ligand>
</feature>
<feature type="binding site" evidence="2">
    <location>
        <position position="166"/>
    </location>
    <ligand>
        <name>an alpha-D-glucoside</name>
        <dbReference type="ChEBI" id="CHEBI:22390"/>
    </ligand>
</feature>
<feature type="binding site" evidence="2">
    <location>
        <position position="173"/>
    </location>
    <ligand>
        <name>an alpha-D-glucoside</name>
        <dbReference type="ChEBI" id="CHEBI:22390"/>
    </ligand>
</feature>
<feature type="binding site" evidence="2">
    <location>
        <position position="402"/>
    </location>
    <ligand>
        <name>an alpha-D-glucoside</name>
        <dbReference type="ChEBI" id="CHEBI:22390"/>
    </ligand>
</feature>
<feature type="binding site" evidence="1">
    <location>
        <position position="413"/>
    </location>
    <ligand>
        <name>Ca(2+)</name>
        <dbReference type="ChEBI" id="CHEBI:29108"/>
    </ligand>
</feature>
<feature type="glycosylation site" description="N-linked (GlcNAc...) asparagine" evidence="3">
    <location>
        <position position="236"/>
    </location>
</feature>
<feature type="disulfide bond" evidence="1">
    <location>
        <begin position="141"/>
        <end position="175"/>
    </location>
</feature>
<feature type="disulfide bond" evidence="1">
    <location>
        <begin position="337"/>
        <end position="343"/>
    </location>
</feature>
<feature type="sequence conflict" description="In Ref. 1; AAS68033." evidence="5" ref="1">
    <original>V</original>
    <variation>G</variation>
    <location>
        <position position="332"/>
    </location>
</feature>
<feature type="sequence conflict" description="In Ref. 1; AAS68033." evidence="5" ref="1">
    <original>S</original>
    <variation>P</variation>
    <location>
        <position position="446"/>
    </location>
</feature>
<feature type="sequence conflict" description="In Ref. 1; AAS68033." evidence="5" ref="1">
    <original>G</original>
    <variation>D</variation>
    <location>
        <position position="527"/>
    </location>
</feature>